<gene>
    <name evidence="1 2" type="primary">leg1</name>
</gene>
<comment type="function">
    <text evidence="1 2">May be involved in early liver development.</text>
</comment>
<comment type="subcellular location">
    <subcellularLocation>
        <location evidence="1 2">Secreted</location>
    </subcellularLocation>
</comment>
<comment type="similarity">
    <text evidence="4">Belongs to the LEG1 family.</text>
</comment>
<feature type="signal peptide" evidence="3">
    <location>
        <begin position="1"/>
        <end position="19"/>
    </location>
</feature>
<feature type="chain" id="PRO_0000252388" description="Protein LEG1 homolog">
    <location>
        <begin position="20"/>
        <end position="363"/>
    </location>
</feature>
<feature type="glycosylation site" description="N-linked (GlcNAc...) asparagine" evidence="3">
    <location>
        <position position="79"/>
    </location>
</feature>
<feature type="glycosylation site" description="N-linked (GlcNAc...) asparagine" evidence="3">
    <location>
        <position position="261"/>
    </location>
</feature>
<feature type="glycosylation site" description="N-linked (GlcNAc...) asparagine" evidence="3">
    <location>
        <position position="292"/>
    </location>
</feature>
<reference key="1">
    <citation type="submission" date="2002-12" db="EMBL/GenBank/DDBJ databases">
        <title>Sequence analysis of rainbow trout genes modulated by bacterial infection.</title>
        <authorList>
            <person name="Wang T."/>
            <person name="Secombes C.J."/>
        </authorList>
    </citation>
    <scope>NUCLEOTIDE SEQUENCE [MRNA]</scope>
    <source>
        <tissue>Liver</tissue>
    </source>
</reference>
<proteinExistence type="evidence at transcript level"/>
<evidence type="ECO:0000250" key="1">
    <source>
        <dbReference type="UniProtKB" id="A5PF61"/>
    </source>
</evidence>
<evidence type="ECO:0000250" key="2">
    <source>
        <dbReference type="UniProtKB" id="Q4QRF7"/>
    </source>
</evidence>
<evidence type="ECO:0000255" key="3"/>
<evidence type="ECO:0000305" key="4"/>
<sequence>MQCVWTLSLLQLVALWANAAVLTENGLPILWDQAPSQLSDLPQADDVVTINPWNSLQRMSLYRILVGSTDKYMASMGTNDSASPLWGLPLQLAWKVRSGRLVDPTGATTCGQEGDPMCISTNSWWACVNYYLSVIPFLAAVQKGLIGDGLIQVQVQAPAEAAEDSCTSYTDCSAKYPDLMAKWEEFFQTLKDVSASEISDFEKRDQILGAFWAGETLSLNTASSSCKAKMSYYSSPEVAFAKSWMNAADYVAAAYFQSSLNNSVLFMGPLPSRVLQEGDSAPNIADLSTEENHTLYIFGWMNRMNTILLGSPVKMWRSAMCSDKAREKGRELLQNLILDPKFAVSTFVSILTEMTRSCTGLST</sequence>
<keyword id="KW-0217">Developmental protein</keyword>
<keyword id="KW-0325">Glycoprotein</keyword>
<keyword id="KW-0964">Secreted</keyword>
<keyword id="KW-0732">Signal</keyword>
<name>LEG1H_ONCMY</name>
<protein>
    <recommendedName>
        <fullName evidence="1 2">Protein LEG1 homolog</fullName>
    </recommendedName>
</protein>
<accession>Q5QT17</accession>
<dbReference type="EMBL" id="AJ519931">
    <property type="protein sequence ID" value="CAD58655.1"/>
    <property type="molecule type" value="mRNA"/>
</dbReference>
<dbReference type="RefSeq" id="NP_001117853.1">
    <property type="nucleotide sequence ID" value="NM_001124381.1"/>
</dbReference>
<dbReference type="SMR" id="Q5QT17"/>
<dbReference type="GlyCosmos" id="Q5QT17">
    <property type="glycosylation" value="3 sites, No reported glycans"/>
</dbReference>
<dbReference type="GeneID" id="100136074"/>
<dbReference type="KEGG" id="omy:100136074"/>
<dbReference type="CTD" id="140650"/>
<dbReference type="OrthoDB" id="17046at2759"/>
<dbReference type="Proteomes" id="UP000694395">
    <property type="component" value="Unplaced"/>
</dbReference>
<dbReference type="GO" id="GO:0005615">
    <property type="term" value="C:extracellular space"/>
    <property type="evidence" value="ECO:0007669"/>
    <property type="project" value="TreeGrafter"/>
</dbReference>
<dbReference type="InterPro" id="IPR008499">
    <property type="entry name" value="Leg1"/>
</dbReference>
<dbReference type="PANTHER" id="PTHR18820">
    <property type="entry name" value="LEG1"/>
    <property type="match status" value="1"/>
</dbReference>
<dbReference type="PANTHER" id="PTHR18820:SF1">
    <property type="entry name" value="PROTEIN LEG1 HOMOLOG"/>
    <property type="match status" value="1"/>
</dbReference>
<dbReference type="Pfam" id="PF05612">
    <property type="entry name" value="Leg1"/>
    <property type="match status" value="1"/>
</dbReference>
<organism>
    <name type="scientific">Oncorhynchus mykiss</name>
    <name type="common">Rainbow trout</name>
    <name type="synonym">Salmo gairdneri</name>
    <dbReference type="NCBI Taxonomy" id="8022"/>
    <lineage>
        <taxon>Eukaryota</taxon>
        <taxon>Metazoa</taxon>
        <taxon>Chordata</taxon>
        <taxon>Craniata</taxon>
        <taxon>Vertebrata</taxon>
        <taxon>Euteleostomi</taxon>
        <taxon>Actinopterygii</taxon>
        <taxon>Neopterygii</taxon>
        <taxon>Teleostei</taxon>
        <taxon>Protacanthopterygii</taxon>
        <taxon>Salmoniformes</taxon>
        <taxon>Salmonidae</taxon>
        <taxon>Salmoninae</taxon>
        <taxon>Oncorhynchus</taxon>
    </lineage>
</organism>